<proteinExistence type="inferred from homology"/>
<organism>
    <name type="scientific">Exsertotheca crispa</name>
    <name type="common">Moss</name>
    <name type="synonym">Neckera crispa</name>
    <dbReference type="NCBI Taxonomy" id="103981"/>
    <lineage>
        <taxon>Eukaryota</taxon>
        <taxon>Viridiplantae</taxon>
        <taxon>Streptophyta</taxon>
        <taxon>Embryophyta</taxon>
        <taxon>Bryophyta</taxon>
        <taxon>Bryophytina</taxon>
        <taxon>Bryopsida</taxon>
        <taxon>Bryidae</taxon>
        <taxon>Hypnanae</taxon>
        <taxon>Hypnales</taxon>
        <taxon>Neckeraceae</taxon>
        <taxon>Exsertotheca</taxon>
    </lineage>
</organism>
<accession>P59149</accession>
<gene>
    <name type="primary">rps4</name>
</gene>
<reference key="1">
    <citation type="journal article" date="2002" name="Cryptogam. Bryol.">
        <title>The systematic position of the Hypoptergiaceae (Bryopsida) inferred from rps4 gene sequences.</title>
        <authorList>
            <person name="Bloecher R."/>
            <person name="Capesius I."/>
        </authorList>
    </citation>
    <scope>NUCLEOTIDE SEQUENCE [GENOMIC DNA]</scope>
    <source>
        <tissue>Gametophyte</tissue>
    </source>
</reference>
<comment type="function">
    <text evidence="1">One of the primary rRNA binding proteins, it binds directly to 16S rRNA where it nucleates assembly of the body of the 30S subunit.</text>
</comment>
<comment type="function">
    <text evidence="1">With S5 and S12 plays an important role in translational accuracy.</text>
</comment>
<comment type="subunit">
    <text evidence="1">Part of the 30S ribosomal subunit. Contacts protein S5. The interaction surface between S4 and S5 is involved in control of translational fidelity (By similarity).</text>
</comment>
<comment type="subcellular location">
    <subcellularLocation>
        <location>Plastid</location>
        <location>Chloroplast</location>
    </subcellularLocation>
</comment>
<comment type="similarity">
    <text evidence="2">Belongs to the universal ribosomal protein uS4 family.</text>
</comment>
<keyword id="KW-0150">Chloroplast</keyword>
<keyword id="KW-0934">Plastid</keyword>
<keyword id="KW-0687">Ribonucleoprotein</keyword>
<keyword id="KW-0689">Ribosomal protein</keyword>
<keyword id="KW-0694">RNA-binding</keyword>
<keyword id="KW-0699">rRNA-binding</keyword>
<dbReference type="EMBL" id="AJ269692">
    <property type="protein sequence ID" value="CAC80632.1"/>
    <property type="molecule type" value="Genomic_DNA"/>
</dbReference>
<dbReference type="SMR" id="P59149"/>
<dbReference type="GO" id="GO:0009507">
    <property type="term" value="C:chloroplast"/>
    <property type="evidence" value="ECO:0007669"/>
    <property type="project" value="UniProtKB-SubCell"/>
</dbReference>
<dbReference type="GO" id="GO:0015935">
    <property type="term" value="C:small ribosomal subunit"/>
    <property type="evidence" value="ECO:0007669"/>
    <property type="project" value="InterPro"/>
</dbReference>
<dbReference type="GO" id="GO:0019843">
    <property type="term" value="F:rRNA binding"/>
    <property type="evidence" value="ECO:0007669"/>
    <property type="project" value="UniProtKB-UniRule"/>
</dbReference>
<dbReference type="GO" id="GO:0003735">
    <property type="term" value="F:structural constituent of ribosome"/>
    <property type="evidence" value="ECO:0007669"/>
    <property type="project" value="InterPro"/>
</dbReference>
<dbReference type="GO" id="GO:0042274">
    <property type="term" value="P:ribosomal small subunit biogenesis"/>
    <property type="evidence" value="ECO:0007669"/>
    <property type="project" value="TreeGrafter"/>
</dbReference>
<dbReference type="GO" id="GO:0006412">
    <property type="term" value="P:translation"/>
    <property type="evidence" value="ECO:0007669"/>
    <property type="project" value="UniProtKB-UniRule"/>
</dbReference>
<dbReference type="CDD" id="cd00165">
    <property type="entry name" value="S4"/>
    <property type="match status" value="1"/>
</dbReference>
<dbReference type="FunFam" id="1.10.1050.10:FF:000002">
    <property type="entry name" value="30S ribosomal protein S4, chloroplastic"/>
    <property type="match status" value="1"/>
</dbReference>
<dbReference type="FunFam" id="3.10.290.10:FF:000081">
    <property type="entry name" value="30S ribosomal protein S4, chloroplastic"/>
    <property type="match status" value="1"/>
</dbReference>
<dbReference type="Gene3D" id="1.10.1050.10">
    <property type="entry name" value="Ribosomal Protein S4 Delta 41, Chain A, domain 1"/>
    <property type="match status" value="1"/>
</dbReference>
<dbReference type="Gene3D" id="3.10.290.10">
    <property type="entry name" value="RNA-binding S4 domain"/>
    <property type="match status" value="1"/>
</dbReference>
<dbReference type="HAMAP" id="MF_01306_B">
    <property type="entry name" value="Ribosomal_uS4_B"/>
    <property type="match status" value="1"/>
</dbReference>
<dbReference type="InterPro" id="IPR022801">
    <property type="entry name" value="Ribosomal_uS4"/>
</dbReference>
<dbReference type="InterPro" id="IPR005709">
    <property type="entry name" value="Ribosomal_uS4_bac-type"/>
</dbReference>
<dbReference type="InterPro" id="IPR001912">
    <property type="entry name" value="Ribosomal_uS4_N"/>
</dbReference>
<dbReference type="InterPro" id="IPR002942">
    <property type="entry name" value="S4_RNA-bd"/>
</dbReference>
<dbReference type="InterPro" id="IPR036986">
    <property type="entry name" value="S4_RNA-bd_sf"/>
</dbReference>
<dbReference type="NCBIfam" id="NF003717">
    <property type="entry name" value="PRK05327.1"/>
    <property type="match status" value="1"/>
</dbReference>
<dbReference type="NCBIfam" id="TIGR01017">
    <property type="entry name" value="rpsD_bact"/>
    <property type="match status" value="1"/>
</dbReference>
<dbReference type="PANTHER" id="PTHR11831">
    <property type="entry name" value="30S 40S RIBOSOMAL PROTEIN"/>
    <property type="match status" value="1"/>
</dbReference>
<dbReference type="PANTHER" id="PTHR11831:SF4">
    <property type="entry name" value="SMALL RIBOSOMAL SUBUNIT PROTEIN US4M"/>
    <property type="match status" value="1"/>
</dbReference>
<dbReference type="Pfam" id="PF00163">
    <property type="entry name" value="Ribosomal_S4"/>
    <property type="match status" value="1"/>
</dbReference>
<dbReference type="Pfam" id="PF01479">
    <property type="entry name" value="S4"/>
    <property type="match status" value="1"/>
</dbReference>
<dbReference type="SMART" id="SM01390">
    <property type="entry name" value="Ribosomal_S4"/>
    <property type="match status" value="1"/>
</dbReference>
<dbReference type="SMART" id="SM00363">
    <property type="entry name" value="S4"/>
    <property type="match status" value="1"/>
</dbReference>
<dbReference type="SUPFAM" id="SSF55174">
    <property type="entry name" value="Alpha-L RNA-binding motif"/>
    <property type="match status" value="1"/>
</dbReference>
<dbReference type="PROSITE" id="PS50889">
    <property type="entry name" value="S4"/>
    <property type="match status" value="1"/>
</dbReference>
<name>RR4_EXSCR</name>
<evidence type="ECO:0000250" key="1"/>
<evidence type="ECO:0000305" key="2"/>
<protein>
    <recommendedName>
        <fullName evidence="2">Small ribosomal subunit protein uS4c</fullName>
    </recommendedName>
    <alternativeName>
        <fullName>30S ribosomal protein S4, chloroplastic</fullName>
    </alternativeName>
</protein>
<geneLocation type="chloroplast"/>
<sequence>MSRYRGPRVRIIRRLGTLPGLTNKTSQLKSSSINQSISNKKISQYRIRLEEKQKLRFHYGITERQLLNYVRIARKAKGSTGEVLLQLLEMRSDNVIFRLGMAPTIPGARQLVNHRHILVNDCIVDIPSYRCKPQDFITIKNQRKSETMISKNIELYQKSKIPNHLTYSSLEKKGLVNQILDRESIGLKINELLVVEYYSRQA</sequence>
<feature type="chain" id="PRO_0000132633" description="Small ribosomal subunit protein uS4c">
    <location>
        <begin position="1"/>
        <end position="202"/>
    </location>
</feature>
<feature type="domain" description="S4 RNA-binding">
    <location>
        <begin position="90"/>
        <end position="158"/>
    </location>
</feature>